<accession>P82868</accession>
<proteinExistence type="evidence at protein level"/>
<reference key="1">
    <citation type="journal article" date="2002" name="Plant Physiol.">
        <title>Spermidine-binding proteins. Purification and expression analysis in maize.</title>
        <authorList>
            <person name="Tassoni A."/>
            <person name="Napier R.M."/>
            <person name="Franceschetti M."/>
            <person name="Venis M.A."/>
            <person name="Bagni N."/>
        </authorList>
    </citation>
    <scope>PROTEIN SEQUENCE</scope>
    <scope>SUBCELLULAR LOCATION</scope>
    <source>
        <strain>cv. Cecilia</strain>
        <tissue>Coleoptile</tissue>
    </source>
</reference>
<name>SB60_MAIZE</name>
<evidence type="ECO:0000256" key="1">
    <source>
        <dbReference type="SAM" id="MobiDB-lite"/>
    </source>
</evidence>
<evidence type="ECO:0000269" key="2">
    <source>
    </source>
</evidence>
<evidence type="ECO:0000305" key="3"/>
<comment type="function">
    <text>May have spermidine-binding activity.</text>
</comment>
<comment type="subunit">
    <text evidence="3">Dimer of 18 kDa and 60 kDa subunit.</text>
</comment>
<comment type="subcellular location">
    <subcellularLocation>
        <location evidence="2">Microsome membrane</location>
    </subcellularLocation>
    <subcellularLocation>
        <location evidence="2">Endoplasmic reticulum membrane</location>
    </subcellularLocation>
</comment>
<comment type="miscellaneous">
    <text>On the 2D-gel its MW is: 60 kDa.</text>
</comment>
<organism>
    <name type="scientific">Zea mays</name>
    <name type="common">Maize</name>
    <dbReference type="NCBI Taxonomy" id="4577"/>
    <lineage>
        <taxon>Eukaryota</taxon>
        <taxon>Viridiplantae</taxon>
        <taxon>Streptophyta</taxon>
        <taxon>Embryophyta</taxon>
        <taxon>Tracheophyta</taxon>
        <taxon>Spermatophyta</taxon>
        <taxon>Magnoliopsida</taxon>
        <taxon>Liliopsida</taxon>
        <taxon>Poales</taxon>
        <taxon>Poaceae</taxon>
        <taxon>PACMAD clade</taxon>
        <taxon>Panicoideae</taxon>
        <taxon>Andropogonodae</taxon>
        <taxon>Andropogoneae</taxon>
        <taxon>Tripsacinae</taxon>
        <taxon>Zea</taxon>
    </lineage>
</organism>
<keyword id="KW-0903">Direct protein sequencing</keyword>
<keyword id="KW-0256">Endoplasmic reticulum</keyword>
<keyword id="KW-0472">Membrane</keyword>
<keyword id="KW-0492">Microsome</keyword>
<keyword id="KW-1185">Reference proteome</keyword>
<feature type="chain" id="PRO_0000097601" description="Putative 60 kDa spermidine-binding protein">
    <location>
        <begin position="1"/>
        <end position="20" status="greater than"/>
    </location>
</feature>
<feature type="region of interest" description="Disordered" evidence="1">
    <location>
        <begin position="1"/>
        <end position="20"/>
    </location>
</feature>
<feature type="compositionally biased region" description="Polar residues" evidence="1">
    <location>
        <begin position="10"/>
        <end position="20"/>
    </location>
</feature>
<feature type="non-terminal residue">
    <location>
        <position position="20"/>
    </location>
</feature>
<protein>
    <recommendedName>
        <fullName>Putative 60 kDa spermidine-binding protein</fullName>
    </recommendedName>
</protein>
<dbReference type="InParanoid" id="P82868"/>
<dbReference type="Proteomes" id="UP000007305">
    <property type="component" value="Unplaced"/>
</dbReference>
<dbReference type="GO" id="GO:0005789">
    <property type="term" value="C:endoplasmic reticulum membrane"/>
    <property type="evidence" value="ECO:0007669"/>
    <property type="project" value="UniProtKB-SubCell"/>
</dbReference>
<sequence>SXAAVVEPPETSQNRIAKGE</sequence>